<proteinExistence type="evidence at transcript level"/>
<sequence length="660" mass="75487">MALVTLRRNLYHLSDFRIHGALAALKTQQVNHVHKTVKEHLCPWFWSQHPGPIRVRFHHAHCKKFHSENGNDLHPVGEPGFSQVHNWDRFEHSVKNVDEQMFYRKLNSFTSSGEILRFVSTLETLPDTMMAGALHRICEVERKDGDQRLPKEILESSAFQALCDRFGRDPSDLSNAGLVTAFQALTLLCGDPQSHLLMNLEAECQHRLERGGLDVHSLCILGETLIKLHGPGCSTLDLIIYQLQGESLETFTPEDIVTVYRLLQASPEKADQQQRFLNKINHFSLSLVSNLSPKLMSQMLTALVVLDQTQALPLVIKLSKYVVRHIARFTSEELRKVLEALIYFGHSDRFFTETLEQHVASLCLTLDPELVSRVMEYCSRKLILSEPIFNAVAETFVCQAEKFSPSQTAKLIEPFGKLNYLPPNASALFRKLENMLLTRFNHFPPKTLLRLLHSCSLIESHPVNFMAKIFSPYFLQQLQGAESYLDRLSLAQLTQLFLTSILECPFYKGPKLLPKFQVKSFLTPCSSLETPMDFHLYKSVMIGLIDLLGARLYFSSKVLTPYCYTIDVEIKLDEDGFVLPFTIDEDVHKRVALCIDGPKRFCLNSKHLLGKEATKQRHLRLLGYQVVQIPYYEIEMLKSRLELVDYLQGKLFSQNSGGHW</sequence>
<protein>
    <recommendedName>
        <fullName>FAST kinase domain-containing protein 3, mitochondrial</fullName>
    </recommendedName>
</protein>
<dbReference type="EMBL" id="BT021825">
    <property type="protein sequence ID" value="AAX46672.1"/>
    <property type="molecule type" value="mRNA"/>
</dbReference>
<dbReference type="EMBL" id="DT840127">
    <property type="status" value="NOT_ANNOTATED_CDS"/>
    <property type="molecule type" value="mRNA"/>
</dbReference>
<dbReference type="RefSeq" id="NP_001019699.2">
    <molecule id="Q58CX2-1"/>
    <property type="nucleotide sequence ID" value="NM_001024528.2"/>
</dbReference>
<dbReference type="RefSeq" id="XP_005221703.1">
    <molecule id="Q58CX2-1"/>
    <property type="nucleotide sequence ID" value="XM_005221646.5"/>
</dbReference>
<dbReference type="SMR" id="Q58CX2"/>
<dbReference type="FunCoup" id="Q58CX2">
    <property type="interactions" value="2545"/>
</dbReference>
<dbReference type="STRING" id="9913.ENSBTAP00000043394"/>
<dbReference type="PaxDb" id="9913-ENSBTAP00000043394"/>
<dbReference type="GeneID" id="513260"/>
<dbReference type="KEGG" id="bta:513260"/>
<dbReference type="CTD" id="79072"/>
<dbReference type="VEuPathDB" id="HostDB:ENSBTAG00000009400"/>
<dbReference type="eggNOG" id="ENOG502QW8P">
    <property type="taxonomic scope" value="Eukaryota"/>
</dbReference>
<dbReference type="HOGENOM" id="CLU_028858_0_0_1"/>
<dbReference type="InParanoid" id="Q58CX2"/>
<dbReference type="OMA" id="VQIPYHE"/>
<dbReference type="OrthoDB" id="9985850at2759"/>
<dbReference type="TreeFam" id="TF324885"/>
<dbReference type="Proteomes" id="UP000009136">
    <property type="component" value="Chromosome 20"/>
</dbReference>
<dbReference type="Bgee" id="ENSBTAG00000009400">
    <property type="expression patterns" value="Expressed in oocyte and 105 other cell types or tissues"/>
</dbReference>
<dbReference type="GO" id="GO:0005759">
    <property type="term" value="C:mitochondrial matrix"/>
    <property type="evidence" value="ECO:0000318"/>
    <property type="project" value="GO_Central"/>
</dbReference>
<dbReference type="GO" id="GO:0005739">
    <property type="term" value="C:mitochondrion"/>
    <property type="evidence" value="ECO:0000250"/>
    <property type="project" value="UniProtKB"/>
</dbReference>
<dbReference type="GO" id="GO:0035770">
    <property type="term" value="C:ribonucleoprotein granule"/>
    <property type="evidence" value="ECO:0000318"/>
    <property type="project" value="GO_Central"/>
</dbReference>
<dbReference type="GO" id="GO:0003723">
    <property type="term" value="F:RNA binding"/>
    <property type="evidence" value="ECO:0000318"/>
    <property type="project" value="GO_Central"/>
</dbReference>
<dbReference type="GO" id="GO:0033617">
    <property type="term" value="P:mitochondrial cytochrome c oxidase assembly"/>
    <property type="evidence" value="ECO:0000250"/>
    <property type="project" value="UniProtKB"/>
</dbReference>
<dbReference type="GO" id="GO:0000963">
    <property type="term" value="P:mitochondrial RNA processing"/>
    <property type="evidence" value="ECO:0000318"/>
    <property type="project" value="GO_Central"/>
</dbReference>
<dbReference type="GO" id="GO:0070131">
    <property type="term" value="P:positive regulation of mitochondrial translation"/>
    <property type="evidence" value="ECO:0000250"/>
    <property type="project" value="UniProtKB"/>
</dbReference>
<dbReference type="GO" id="GO:0044528">
    <property type="term" value="P:regulation of mitochondrial mRNA stability"/>
    <property type="evidence" value="ECO:0000250"/>
    <property type="project" value="UniProtKB"/>
</dbReference>
<dbReference type="InterPro" id="IPR013579">
    <property type="entry name" value="FAST_2"/>
</dbReference>
<dbReference type="InterPro" id="IPR050870">
    <property type="entry name" value="FAST_kinase"/>
</dbReference>
<dbReference type="InterPro" id="IPR010622">
    <property type="entry name" value="FAST_Leu-rich"/>
</dbReference>
<dbReference type="InterPro" id="IPR013584">
    <property type="entry name" value="RAP"/>
</dbReference>
<dbReference type="PANTHER" id="PTHR21228:SF9">
    <property type="entry name" value="FAST KINASE DOMAIN-CONTAINING PROTEIN 3, MITOCHONDRIAL"/>
    <property type="match status" value="1"/>
</dbReference>
<dbReference type="PANTHER" id="PTHR21228">
    <property type="entry name" value="FAST LEU-RICH DOMAIN-CONTAINING"/>
    <property type="match status" value="1"/>
</dbReference>
<dbReference type="Pfam" id="PF06743">
    <property type="entry name" value="FAST_1"/>
    <property type="match status" value="1"/>
</dbReference>
<dbReference type="Pfam" id="PF08368">
    <property type="entry name" value="FAST_2"/>
    <property type="match status" value="1"/>
</dbReference>
<dbReference type="Pfam" id="PF08373">
    <property type="entry name" value="RAP"/>
    <property type="match status" value="1"/>
</dbReference>
<dbReference type="SMART" id="SM00952">
    <property type="entry name" value="RAP"/>
    <property type="match status" value="1"/>
</dbReference>
<dbReference type="PROSITE" id="PS51286">
    <property type="entry name" value="RAP"/>
    <property type="match status" value="1"/>
</dbReference>
<gene>
    <name type="primary">FASTKD3</name>
</gene>
<name>FAKD3_BOVIN</name>
<organism>
    <name type="scientific">Bos taurus</name>
    <name type="common">Bovine</name>
    <dbReference type="NCBI Taxonomy" id="9913"/>
    <lineage>
        <taxon>Eukaryota</taxon>
        <taxon>Metazoa</taxon>
        <taxon>Chordata</taxon>
        <taxon>Craniata</taxon>
        <taxon>Vertebrata</taxon>
        <taxon>Euteleostomi</taxon>
        <taxon>Mammalia</taxon>
        <taxon>Eutheria</taxon>
        <taxon>Laurasiatheria</taxon>
        <taxon>Artiodactyla</taxon>
        <taxon>Ruminantia</taxon>
        <taxon>Pecora</taxon>
        <taxon>Bovidae</taxon>
        <taxon>Bovinae</taxon>
        <taxon>Bos</taxon>
    </lineage>
</organism>
<accession>Q58CX2</accession>
<comment type="function">
    <text evidence="1">Required for normal mitochondrial respiration. Increases steady-state levels and half-lives of a subset of mature mitochondrial mRNAs MT-ND2, MT-ND3, MT-CYTB, MT-CO2, and MT-ATP8/6. Promotes MT-CO1 mRNA translation and increases mitochondrial complex IV assembly and activity.</text>
</comment>
<comment type="subcellular location">
    <subcellularLocation>
        <location evidence="1">Mitochondrion</location>
    </subcellularLocation>
</comment>
<comment type="alternative products">
    <event type="alternative splicing"/>
    <isoform>
        <id>Q58CX2-1</id>
        <name>1</name>
        <sequence type="displayed"/>
    </isoform>
    <isoform>
        <id>Q58CX2-2</id>
        <name>2</name>
        <sequence type="described" ref="VSP_024622 VSP_024623"/>
    </isoform>
</comment>
<comment type="domain">
    <text evidence="1">RAP domain is required for FASTKD3 function in mRNA stability and translation.</text>
</comment>
<comment type="similarity">
    <text evidence="5">Belongs to the FAST kinase family.</text>
</comment>
<keyword id="KW-0025">Alternative splicing</keyword>
<keyword id="KW-0496">Mitochondrion</keyword>
<keyword id="KW-1185">Reference proteome</keyword>
<keyword id="KW-0809">Transit peptide</keyword>
<reference key="1">
    <citation type="journal article" date="2005" name="BMC Genomics">
        <title>Characterization of 954 bovine full-CDS cDNA sequences.</title>
        <authorList>
            <person name="Harhay G.P."/>
            <person name="Sonstegard T.S."/>
            <person name="Keele J.W."/>
            <person name="Heaton M.P."/>
            <person name="Clawson M.L."/>
            <person name="Snelling W.M."/>
            <person name="Wiedmann R.T."/>
            <person name="Van Tassell C.P."/>
            <person name="Smith T.P.L."/>
        </authorList>
    </citation>
    <scope>NUCLEOTIDE SEQUENCE [LARGE SCALE MRNA] (ISOFORM 2)</scope>
</reference>
<reference key="2">
    <citation type="submission" date="2005-10" db="EMBL/GenBank/DDBJ databases">
        <authorList>
            <consortium name="NIH - Mammalian Gene Collection (MGC) project"/>
        </authorList>
    </citation>
    <scope>NUCLEOTIDE SEQUENCE [LARGE SCALE MRNA] OF 482-660 (ISOFORM 1)</scope>
</reference>
<evidence type="ECO:0000250" key="1">
    <source>
        <dbReference type="UniProtKB" id="Q14CZ7"/>
    </source>
</evidence>
<evidence type="ECO:0000255" key="2"/>
<evidence type="ECO:0000255" key="3">
    <source>
        <dbReference type="PROSITE-ProRule" id="PRU00619"/>
    </source>
</evidence>
<evidence type="ECO:0000303" key="4">
    <source>
    </source>
</evidence>
<evidence type="ECO:0000305" key="5"/>
<feature type="transit peptide" description="Mitochondrion" evidence="2">
    <location>
        <begin position="1"/>
        <end position="57"/>
    </location>
</feature>
<feature type="chain" id="PRO_0000284714" description="FAST kinase domain-containing protein 3, mitochondrial">
    <location>
        <begin position="58"/>
        <end position="660"/>
    </location>
</feature>
<feature type="domain" description="RAP" evidence="3">
    <location>
        <begin position="591"/>
        <end position="649"/>
    </location>
</feature>
<feature type="splice variant" id="VSP_024622" description="In isoform 2." evidence="4">
    <original>HSCSLIESHPVNFMAKIFSPYFLQQLQGAESYLDRLSLAQLTQLFLTSILECPFYKGPKLLPKFQVKSFLTPCSSLETPMDFHLYKSVMIGLIDLLGARLYFSSKVL</original>
    <variation>LLPSIFPSIKIFSSEPVLRIKWPKYWSFSISPSHEYSRWIFLEDGLVGSPCSPRDSQEPSPTPQFESINSSVLSSLYSPTVTSRHDYWKNHSFDSMDLCQQGDVFAF</variation>
    <location>
        <begin position="453"/>
        <end position="559"/>
    </location>
</feature>
<feature type="splice variant" id="VSP_024623" description="In isoform 2." evidence="4">
    <location>
        <begin position="560"/>
        <end position="660"/>
    </location>
</feature>
<feature type="sequence conflict" description="In Ref. 1; AAX46672." evidence="5" ref="1">
    <original>F</original>
    <variation>L</variation>
    <location>
        <position position="45"/>
    </location>
</feature>
<feature type="sequence conflict" description="In Ref. 1; AAX46672." evidence="5" ref="1">
    <original>Y</original>
    <variation>F</variation>
    <location>
        <position position="343"/>
    </location>
</feature>